<evidence type="ECO:0000255" key="1">
    <source>
        <dbReference type="HAMAP-Rule" id="MF_00144"/>
    </source>
</evidence>
<evidence type="ECO:0000305" key="2"/>
<comment type="function">
    <text evidence="1">Catalyzes the 2-thiolation of uridine at the wobble position (U34) of tRNA, leading to the formation of s(2)U34.</text>
</comment>
<comment type="catalytic activity">
    <reaction evidence="1">
        <text>S-sulfanyl-L-cysteinyl-[protein] + uridine(34) in tRNA + AH2 + ATP = 2-thiouridine(34) in tRNA + L-cysteinyl-[protein] + A + AMP + diphosphate + H(+)</text>
        <dbReference type="Rhea" id="RHEA:47032"/>
        <dbReference type="Rhea" id="RHEA-COMP:10131"/>
        <dbReference type="Rhea" id="RHEA-COMP:11726"/>
        <dbReference type="Rhea" id="RHEA-COMP:11727"/>
        <dbReference type="Rhea" id="RHEA-COMP:11728"/>
        <dbReference type="ChEBI" id="CHEBI:13193"/>
        <dbReference type="ChEBI" id="CHEBI:15378"/>
        <dbReference type="ChEBI" id="CHEBI:17499"/>
        <dbReference type="ChEBI" id="CHEBI:29950"/>
        <dbReference type="ChEBI" id="CHEBI:30616"/>
        <dbReference type="ChEBI" id="CHEBI:33019"/>
        <dbReference type="ChEBI" id="CHEBI:61963"/>
        <dbReference type="ChEBI" id="CHEBI:65315"/>
        <dbReference type="ChEBI" id="CHEBI:87170"/>
        <dbReference type="ChEBI" id="CHEBI:456215"/>
        <dbReference type="EC" id="2.8.1.13"/>
    </reaction>
</comment>
<comment type="subcellular location">
    <subcellularLocation>
        <location evidence="1">Cytoplasm</location>
    </subcellularLocation>
</comment>
<comment type="similarity">
    <text evidence="1">Belongs to the MnmA/TRMU family.</text>
</comment>
<comment type="sequence caution" evidence="2">
    <conflict type="erroneous initiation">
        <sequence resource="EMBL-CDS" id="ABP53684"/>
    </conflict>
</comment>
<gene>
    <name evidence="1" type="primary">mnmA</name>
    <name type="ordered locus">Strop_1214</name>
</gene>
<keyword id="KW-0067">ATP-binding</keyword>
<keyword id="KW-0963">Cytoplasm</keyword>
<keyword id="KW-1015">Disulfide bond</keyword>
<keyword id="KW-0547">Nucleotide-binding</keyword>
<keyword id="KW-1185">Reference proteome</keyword>
<keyword id="KW-0694">RNA-binding</keyword>
<keyword id="KW-0808">Transferase</keyword>
<keyword id="KW-0819">tRNA processing</keyword>
<keyword id="KW-0820">tRNA-binding</keyword>
<reference key="1">
    <citation type="journal article" date="2007" name="Proc. Natl. Acad. Sci. U.S.A.">
        <title>Genome sequencing reveals complex secondary metabolome in the marine actinomycete Salinispora tropica.</title>
        <authorList>
            <person name="Udwary D.W."/>
            <person name="Zeigler L."/>
            <person name="Asolkar R.N."/>
            <person name="Singan V."/>
            <person name="Lapidus A."/>
            <person name="Fenical W."/>
            <person name="Jensen P.R."/>
            <person name="Moore B.S."/>
        </authorList>
    </citation>
    <scope>NUCLEOTIDE SEQUENCE [LARGE SCALE GENOMIC DNA]</scope>
    <source>
        <strain>ATCC BAA-916 / DSM 44818 / JCM 13857 / NBRC 105044 / CNB-440</strain>
    </source>
</reference>
<accession>A4X484</accession>
<protein>
    <recommendedName>
        <fullName evidence="1">tRNA-specific 2-thiouridylase MnmA</fullName>
        <ecNumber evidence="1">2.8.1.13</ecNumber>
    </recommendedName>
</protein>
<proteinExistence type="inferred from homology"/>
<sequence>MVGVRVLAAMSGGVDSAVAAARAAEAGHDVTGVHLALARNPQTYRTGARGCCTLEDSRDARRAADVLSIPFYVWDMADRFQADVVDDFVAEYAAGRTPNPCLRCNEKIKFAAVLDRAVALGFDAVVTGHHARLGADGLLRRSVDLAKDQSYVLGVLTREQLSRSMFPLGDSTKTQVRAEATRRGLAVADKPDSHDICFVADGDTRGFLARRLGTTPGDVVDGDTGEVVGRHTGAYAYTVGQRRGLHLDRPAPDGRPRYVLSITPKTNTVTVGPAEALAVSQVQARRPVWIGGPRPADPVECEVQLRAHGDVVPATVAVTDDGLRAELHQPLRGVAAGQAIVAYRPDPAGDIVLGSATIAA</sequence>
<name>MNMA_SALTO</name>
<feature type="chain" id="PRO_0000349785" description="tRNA-specific 2-thiouridylase MnmA">
    <location>
        <begin position="1"/>
        <end position="360"/>
    </location>
</feature>
<feature type="region of interest" description="Interaction with tRNA" evidence="1">
    <location>
        <begin position="147"/>
        <end position="149"/>
    </location>
</feature>
<feature type="active site" description="Nucleophile" evidence="1">
    <location>
        <position position="104"/>
    </location>
</feature>
<feature type="active site" description="Cysteine persulfide intermediate" evidence="1">
    <location>
        <position position="197"/>
    </location>
</feature>
<feature type="binding site" evidence="1">
    <location>
        <begin position="9"/>
        <end position="16"/>
    </location>
    <ligand>
        <name>ATP</name>
        <dbReference type="ChEBI" id="CHEBI:30616"/>
    </ligand>
</feature>
<feature type="binding site" evidence="1">
    <location>
        <position position="35"/>
    </location>
    <ligand>
        <name>ATP</name>
        <dbReference type="ChEBI" id="CHEBI:30616"/>
    </ligand>
</feature>
<feature type="binding site" evidence="1">
    <location>
        <position position="128"/>
    </location>
    <ligand>
        <name>ATP</name>
        <dbReference type="ChEBI" id="CHEBI:30616"/>
    </ligand>
</feature>
<feature type="site" description="Interaction with tRNA" evidence="1">
    <location>
        <position position="129"/>
    </location>
</feature>
<feature type="site" description="Interaction with tRNA" evidence="1">
    <location>
        <position position="338"/>
    </location>
</feature>
<feature type="disulfide bond" description="Alternate" evidence="1">
    <location>
        <begin position="104"/>
        <end position="197"/>
    </location>
</feature>
<organism>
    <name type="scientific">Salinispora tropica (strain ATCC BAA-916 / DSM 44818 / JCM 13857 / NBRC 105044 / CNB-440)</name>
    <dbReference type="NCBI Taxonomy" id="369723"/>
    <lineage>
        <taxon>Bacteria</taxon>
        <taxon>Bacillati</taxon>
        <taxon>Actinomycetota</taxon>
        <taxon>Actinomycetes</taxon>
        <taxon>Micromonosporales</taxon>
        <taxon>Micromonosporaceae</taxon>
        <taxon>Salinispora</taxon>
    </lineage>
</organism>
<dbReference type="EC" id="2.8.1.13" evidence="1"/>
<dbReference type="EMBL" id="CP000667">
    <property type="protein sequence ID" value="ABP53684.1"/>
    <property type="status" value="ALT_INIT"/>
    <property type="molecule type" value="Genomic_DNA"/>
</dbReference>
<dbReference type="SMR" id="A4X484"/>
<dbReference type="STRING" id="369723.Strop_1214"/>
<dbReference type="KEGG" id="stp:Strop_1214"/>
<dbReference type="eggNOG" id="COG0482">
    <property type="taxonomic scope" value="Bacteria"/>
</dbReference>
<dbReference type="HOGENOM" id="CLU_035188_0_2_11"/>
<dbReference type="Proteomes" id="UP000000235">
    <property type="component" value="Chromosome"/>
</dbReference>
<dbReference type="GO" id="GO:0005737">
    <property type="term" value="C:cytoplasm"/>
    <property type="evidence" value="ECO:0007669"/>
    <property type="project" value="UniProtKB-SubCell"/>
</dbReference>
<dbReference type="GO" id="GO:0005524">
    <property type="term" value="F:ATP binding"/>
    <property type="evidence" value="ECO:0007669"/>
    <property type="project" value="UniProtKB-KW"/>
</dbReference>
<dbReference type="GO" id="GO:0000049">
    <property type="term" value="F:tRNA binding"/>
    <property type="evidence" value="ECO:0007669"/>
    <property type="project" value="UniProtKB-KW"/>
</dbReference>
<dbReference type="GO" id="GO:0103016">
    <property type="term" value="F:tRNA-uridine 2-sulfurtransferase activity"/>
    <property type="evidence" value="ECO:0007669"/>
    <property type="project" value="UniProtKB-EC"/>
</dbReference>
<dbReference type="GO" id="GO:0002143">
    <property type="term" value="P:tRNA wobble position uridine thiolation"/>
    <property type="evidence" value="ECO:0007669"/>
    <property type="project" value="TreeGrafter"/>
</dbReference>
<dbReference type="CDD" id="cd01998">
    <property type="entry name" value="MnmA_TRMU-like"/>
    <property type="match status" value="1"/>
</dbReference>
<dbReference type="FunFam" id="3.40.50.620:FF:000057">
    <property type="entry name" value="tRNA-specific 2-thiouridylase MnmA"/>
    <property type="match status" value="1"/>
</dbReference>
<dbReference type="Gene3D" id="2.30.30.280">
    <property type="entry name" value="Adenine nucleotide alpha hydrolases-like domains"/>
    <property type="match status" value="1"/>
</dbReference>
<dbReference type="Gene3D" id="3.40.50.620">
    <property type="entry name" value="HUPs"/>
    <property type="match status" value="1"/>
</dbReference>
<dbReference type="Gene3D" id="2.40.30.10">
    <property type="entry name" value="Translation factors"/>
    <property type="match status" value="1"/>
</dbReference>
<dbReference type="HAMAP" id="MF_00144">
    <property type="entry name" value="tRNA_thiouridyl_MnmA"/>
    <property type="match status" value="1"/>
</dbReference>
<dbReference type="InterPro" id="IPR004506">
    <property type="entry name" value="MnmA-like"/>
</dbReference>
<dbReference type="InterPro" id="IPR046885">
    <property type="entry name" value="MnmA-like_C"/>
</dbReference>
<dbReference type="InterPro" id="IPR046884">
    <property type="entry name" value="MnmA-like_central"/>
</dbReference>
<dbReference type="InterPro" id="IPR023382">
    <property type="entry name" value="MnmA-like_central_sf"/>
</dbReference>
<dbReference type="InterPro" id="IPR014729">
    <property type="entry name" value="Rossmann-like_a/b/a_fold"/>
</dbReference>
<dbReference type="NCBIfam" id="NF001138">
    <property type="entry name" value="PRK00143.1"/>
    <property type="match status" value="1"/>
</dbReference>
<dbReference type="NCBIfam" id="TIGR00420">
    <property type="entry name" value="trmU"/>
    <property type="match status" value="1"/>
</dbReference>
<dbReference type="PANTHER" id="PTHR11933:SF5">
    <property type="entry name" value="MITOCHONDRIAL TRNA-SPECIFIC 2-THIOURIDYLASE 1"/>
    <property type="match status" value="1"/>
</dbReference>
<dbReference type="PANTHER" id="PTHR11933">
    <property type="entry name" value="TRNA 5-METHYLAMINOMETHYL-2-THIOURIDYLATE -METHYLTRANSFERASE"/>
    <property type="match status" value="1"/>
</dbReference>
<dbReference type="Pfam" id="PF03054">
    <property type="entry name" value="tRNA_Me_trans"/>
    <property type="match status" value="1"/>
</dbReference>
<dbReference type="Pfam" id="PF20258">
    <property type="entry name" value="tRNA_Me_trans_C"/>
    <property type="match status" value="1"/>
</dbReference>
<dbReference type="Pfam" id="PF20259">
    <property type="entry name" value="tRNA_Me_trans_M"/>
    <property type="match status" value="1"/>
</dbReference>
<dbReference type="SUPFAM" id="SSF52402">
    <property type="entry name" value="Adenine nucleotide alpha hydrolases-like"/>
    <property type="match status" value="1"/>
</dbReference>